<accession>A8I126</accession>
<sequence length="394" mass="41186">MSGPSRTQRPMSPLRAFFHHETSAGLVLMACALAAIAVANSPLAPGYFATLHAYAGPLSVQHWVNDGLMAVFFLLVGLEIKREILTGQLATWGKRTLPGVAAVGGMAIPGIVYVMLNLNNPDALRGWAIPAATDIAFALGVMSLLGSRVPSSLKIFLAALAIIDDLGAVIIIAIFYTANINVATLLGAVFVFGILRSLCAANFQDLRIYLALGAVLWVLLLVSGVHATLAGVLLALTIPITTASATPDPSRQTAPLHRLESLLHAPVAFAILPIFGFANAGVSFASITPAIMTDTLAVGVAAGLLIGKVVGIFGAVALMVRLRLAELPTHATWLQVLGVAFLCGIGFTMSLFIGLLAFEDPHMQDRVKYGILAGSLLAGVLGYGILRIAGRRAL</sequence>
<comment type="function">
    <text evidence="1">Na(+)/H(+) antiporter that extrudes sodium in exchange for external protons.</text>
</comment>
<comment type="catalytic activity">
    <reaction evidence="1">
        <text>Na(+)(in) + 2 H(+)(out) = Na(+)(out) + 2 H(+)(in)</text>
        <dbReference type="Rhea" id="RHEA:29251"/>
        <dbReference type="ChEBI" id="CHEBI:15378"/>
        <dbReference type="ChEBI" id="CHEBI:29101"/>
    </reaction>
    <physiologicalReaction direction="left-to-right" evidence="1">
        <dbReference type="Rhea" id="RHEA:29252"/>
    </physiologicalReaction>
</comment>
<comment type="subcellular location">
    <subcellularLocation>
        <location evidence="1">Cell inner membrane</location>
        <topology evidence="1">Multi-pass membrane protein</topology>
    </subcellularLocation>
</comment>
<comment type="similarity">
    <text evidence="1">Belongs to the NhaA Na(+)/H(+) (TC 2.A.33) antiporter family.</text>
</comment>
<feature type="chain" id="PRO_0000334230" description="Na(+)/H(+) antiporter NhaA">
    <location>
        <begin position="1"/>
        <end position="394"/>
    </location>
</feature>
<feature type="transmembrane region" description="Helical" evidence="1">
    <location>
        <begin position="24"/>
        <end position="44"/>
    </location>
</feature>
<feature type="transmembrane region" description="Helical" evidence="1">
    <location>
        <begin position="58"/>
        <end position="78"/>
    </location>
</feature>
<feature type="transmembrane region" description="Helical" evidence="1">
    <location>
        <begin position="96"/>
        <end position="116"/>
    </location>
</feature>
<feature type="transmembrane region" description="Helical" evidence="1">
    <location>
        <begin position="126"/>
        <end position="146"/>
    </location>
</feature>
<feature type="transmembrane region" description="Helical" evidence="1">
    <location>
        <begin position="155"/>
        <end position="175"/>
    </location>
</feature>
<feature type="transmembrane region" description="Helical" evidence="1">
    <location>
        <begin position="180"/>
        <end position="200"/>
    </location>
</feature>
<feature type="transmembrane region" description="Helical" evidence="1">
    <location>
        <begin position="214"/>
        <end position="234"/>
    </location>
</feature>
<feature type="transmembrane region" description="Helical" evidence="1">
    <location>
        <begin position="267"/>
        <end position="287"/>
    </location>
</feature>
<feature type="transmembrane region" description="Helical" evidence="1">
    <location>
        <begin position="300"/>
        <end position="320"/>
    </location>
</feature>
<feature type="transmembrane region" description="Helical" evidence="1">
    <location>
        <begin position="336"/>
        <end position="356"/>
    </location>
</feature>
<feature type="transmembrane region" description="Helical" evidence="1">
    <location>
        <begin position="370"/>
        <end position="390"/>
    </location>
</feature>
<keyword id="KW-0050">Antiport</keyword>
<keyword id="KW-0997">Cell inner membrane</keyword>
<keyword id="KW-1003">Cell membrane</keyword>
<keyword id="KW-0406">Ion transport</keyword>
<keyword id="KW-0472">Membrane</keyword>
<keyword id="KW-1185">Reference proteome</keyword>
<keyword id="KW-0915">Sodium</keyword>
<keyword id="KW-0739">Sodium transport</keyword>
<keyword id="KW-0812">Transmembrane</keyword>
<keyword id="KW-1133">Transmembrane helix</keyword>
<keyword id="KW-0813">Transport</keyword>
<proteinExistence type="inferred from homology"/>
<gene>
    <name evidence="1" type="primary">nhaA</name>
    <name type="ordered locus">AZC_1326</name>
</gene>
<protein>
    <recommendedName>
        <fullName evidence="1">Na(+)/H(+) antiporter NhaA</fullName>
    </recommendedName>
    <alternativeName>
        <fullName evidence="1">Sodium/proton antiporter NhaA</fullName>
    </alternativeName>
</protein>
<organism>
    <name type="scientific">Azorhizobium caulinodans (strain ATCC 43989 / DSM 5975 / JCM 20966 / LMG 6465 / NBRC 14845 / NCIMB 13405 / ORS 571)</name>
    <dbReference type="NCBI Taxonomy" id="438753"/>
    <lineage>
        <taxon>Bacteria</taxon>
        <taxon>Pseudomonadati</taxon>
        <taxon>Pseudomonadota</taxon>
        <taxon>Alphaproteobacteria</taxon>
        <taxon>Hyphomicrobiales</taxon>
        <taxon>Xanthobacteraceae</taxon>
        <taxon>Azorhizobium</taxon>
    </lineage>
</organism>
<name>NHAA_AZOC5</name>
<reference key="1">
    <citation type="submission" date="2007-04" db="EMBL/GenBank/DDBJ databases">
        <title>Complete genome sequence of the nitrogen-fixing bacterium Azorhizobium caulinodans ORS571.</title>
        <authorList>
            <person name="Lee K.B."/>
            <person name="Backer P.D."/>
            <person name="Aono T."/>
            <person name="Liu C.T."/>
            <person name="Suzuki S."/>
            <person name="Suzuki T."/>
            <person name="Kaneko T."/>
            <person name="Yamada M."/>
            <person name="Tabata S."/>
            <person name="Kupfer D.M."/>
            <person name="Najar F.Z."/>
            <person name="Wiley G.B."/>
            <person name="Roe B."/>
            <person name="Binnewies T."/>
            <person name="Ussery D."/>
            <person name="Vereecke D."/>
            <person name="Gevers D."/>
            <person name="Holsters M."/>
            <person name="Oyaizu H."/>
        </authorList>
    </citation>
    <scope>NUCLEOTIDE SEQUENCE [LARGE SCALE GENOMIC DNA]</scope>
    <source>
        <strain>ATCC 43989 / DSM 5975 / JCM 20966 / LMG 6465 / NBRC 14845 / NCIMB 13405 / ORS 571</strain>
    </source>
</reference>
<dbReference type="EMBL" id="AP009384">
    <property type="protein sequence ID" value="BAF87324.1"/>
    <property type="molecule type" value="Genomic_DNA"/>
</dbReference>
<dbReference type="RefSeq" id="WP_012169854.1">
    <property type="nucleotide sequence ID" value="NC_009937.1"/>
</dbReference>
<dbReference type="SMR" id="A8I126"/>
<dbReference type="STRING" id="438753.AZC_1326"/>
<dbReference type="KEGG" id="azc:AZC_1326"/>
<dbReference type="eggNOG" id="COG3004">
    <property type="taxonomic scope" value="Bacteria"/>
</dbReference>
<dbReference type="HOGENOM" id="CLU_015803_1_0_5"/>
<dbReference type="Proteomes" id="UP000000270">
    <property type="component" value="Chromosome"/>
</dbReference>
<dbReference type="GO" id="GO:0005886">
    <property type="term" value="C:plasma membrane"/>
    <property type="evidence" value="ECO:0007669"/>
    <property type="project" value="UniProtKB-SubCell"/>
</dbReference>
<dbReference type="GO" id="GO:0015385">
    <property type="term" value="F:sodium:proton antiporter activity"/>
    <property type="evidence" value="ECO:0007669"/>
    <property type="project" value="TreeGrafter"/>
</dbReference>
<dbReference type="GO" id="GO:0006885">
    <property type="term" value="P:regulation of pH"/>
    <property type="evidence" value="ECO:0007669"/>
    <property type="project" value="InterPro"/>
</dbReference>
<dbReference type="Gene3D" id="1.20.1530.10">
    <property type="entry name" value="Na+/H+ antiporter like domain"/>
    <property type="match status" value="1"/>
</dbReference>
<dbReference type="HAMAP" id="MF_01844">
    <property type="entry name" value="NhaA"/>
    <property type="match status" value="1"/>
</dbReference>
<dbReference type="InterPro" id="IPR023171">
    <property type="entry name" value="Na/H_antiporter_dom_sf"/>
</dbReference>
<dbReference type="InterPro" id="IPR004670">
    <property type="entry name" value="NhaA"/>
</dbReference>
<dbReference type="NCBIfam" id="TIGR00773">
    <property type="entry name" value="NhaA"/>
    <property type="match status" value="1"/>
</dbReference>
<dbReference type="NCBIfam" id="NF007111">
    <property type="entry name" value="PRK09560.1"/>
    <property type="match status" value="1"/>
</dbReference>
<dbReference type="NCBIfam" id="NF007112">
    <property type="entry name" value="PRK09561.1"/>
    <property type="match status" value="1"/>
</dbReference>
<dbReference type="PANTHER" id="PTHR30341:SF0">
    <property type="entry name" value="NA(+)_H(+) ANTIPORTER NHAA"/>
    <property type="match status" value="1"/>
</dbReference>
<dbReference type="PANTHER" id="PTHR30341">
    <property type="entry name" value="SODIUM ION/PROTON ANTIPORTER NHAA-RELATED"/>
    <property type="match status" value="1"/>
</dbReference>
<dbReference type="Pfam" id="PF06965">
    <property type="entry name" value="Na_H_antiport_1"/>
    <property type="match status" value="1"/>
</dbReference>
<evidence type="ECO:0000255" key="1">
    <source>
        <dbReference type="HAMAP-Rule" id="MF_01844"/>
    </source>
</evidence>